<sequence length="584" mass="66507">MSFLRRHISLFRSQKQLIDVFAPVSPNLELAEIHRRVIEDQGPALLFHNVIGSSFPVLTNLFGTKHRVDQLFSQAPDNLIARVAHLISSTPKLSSLWKSRDLLKRISSLGLKKARFRRFPFVSMSSVNLDHLPLLTSWPEDGGAFLTLPLVYTESPTLTTPNLGMYRVQRFNQNTMGLHFQIQKGGGMHLYEAEQKKQNLPVSVFLSGNPFLTLSAIAPLPENVSELLFATFLQGAKLLYKKTNDHPHPLLYDAEFILVGESPAGKRRPEGPFGDHFGYYSLQHDFPEFHCHKIYHRKDAIYPATVVGKPYQEDFYIGNKLQEYLSPLFPLVMPGVRRLKSYGESGFHALTAAVVKERYWRESLTTALRILGEGQLSLTKFLMVTDQEVPLDRFSVVLETILERLQPDRDLIIFSETANDTLDYTGPSLNKGSKGIFMGIGKAIRDLPHGYQGGKIHGVQDIAPFCRGCLVLETSLEDRCIKSLLHHPDLKSWPLIILADNLRETIQSEKDFLWRTFTRCAPANDLHALHSHFATHRPNYNFPFVIDALMKPSYPKEVEVDPSTKQKVSERWHAYFPNKETFYI</sequence>
<accession>Q9Z8L0</accession>
<accession>Q9JQJ5</accession>
<gene>
    <name type="ordered locus">CPn_0328</name>
    <name type="ordered locus">CP_0429</name>
    <name type="ordered locus">CPj0328</name>
    <name type="ordered locus">CpB0338</name>
</gene>
<feature type="chain" id="PRO_0000157372" description="4-hydroxybenzoate decarboxylase subunit C">
    <location>
        <begin position="1"/>
        <end position="584"/>
    </location>
</feature>
<name>BSDC_CHLPN</name>
<protein>
    <recommendedName>
        <fullName>4-hydroxybenzoate decarboxylase subunit C</fullName>
        <shortName>4-hydroxybenzoate DC</shortName>
        <shortName>HBDC</shortName>
        <ecNumber>4.1.1.61</ecNumber>
    </recommendedName>
</protein>
<proteinExistence type="evidence at protein level"/>
<keyword id="KW-0210">Decarboxylase</keyword>
<keyword id="KW-0456">Lyase</keyword>
<evidence type="ECO:0000269" key="1">
    <source>
    </source>
</evidence>
<evidence type="ECO:0000305" key="2"/>
<comment type="function">
    <text evidence="1">Catalyzes the reversible decarboxylation of 4-hydroxybenzoate.</text>
</comment>
<comment type="catalytic activity">
    <reaction evidence="1">
        <text>4-hydroxybenzoate + H(+) = phenol + CO2</text>
        <dbReference type="Rhea" id="RHEA:10876"/>
        <dbReference type="ChEBI" id="CHEBI:15378"/>
        <dbReference type="ChEBI" id="CHEBI:15882"/>
        <dbReference type="ChEBI" id="CHEBI:16526"/>
        <dbReference type="ChEBI" id="CHEBI:17879"/>
        <dbReference type="EC" id="4.1.1.61"/>
    </reaction>
</comment>
<comment type="activity regulation">
    <text evidence="1">The enzyme activity is enhanced by Mg(2+), Fe(2+), Mn(2+) and Ca(2+). No stimulation is observed with Cu(2+) and Zn(2+).</text>
</comment>
<comment type="biophysicochemical properties">
    <kinetics>
        <KM evidence="1">0.21 mM for 4-hydroxybenzoate (at pH 7.5 and at 30 degrees Celsius)</KM>
        <Vmax evidence="1">11.9 nmol/min/mg enzyme (at pH 7.5 and at 30 degrees Celsius)</Vmax>
    </kinetics>
    <phDependence>
        <text evidence="1">Optimum pH is 7.5.</text>
    </phDependence>
    <temperatureDependence>
        <text evidence="1">Optimum temperature is 30 degrees Celsius. It loses above 50% decarboxylase activity at 40 degrees Celsius for 5 minutes, and above 25% enzyme activity remains after incubation at 50 degrees Celsius for 5 minutes.</text>
    </temperatureDependence>
</comment>
<comment type="subunit">
    <text evidence="2">Component of the decarboxylase complex composed of the subunits B and C (Potential). The subunit D usually found in other organisms seems to be absent.</text>
</comment>
<comment type="similarity">
    <text evidence="2">Belongs to the UbiD family.</text>
</comment>
<organism>
    <name type="scientific">Chlamydia pneumoniae</name>
    <name type="common">Chlamydophila pneumoniae</name>
    <dbReference type="NCBI Taxonomy" id="83558"/>
    <lineage>
        <taxon>Bacteria</taxon>
        <taxon>Pseudomonadati</taxon>
        <taxon>Chlamydiota</taxon>
        <taxon>Chlamydiia</taxon>
        <taxon>Chlamydiales</taxon>
        <taxon>Chlamydiaceae</taxon>
        <taxon>Chlamydia/Chlamydophila group</taxon>
        <taxon>Chlamydia</taxon>
    </lineage>
</organism>
<dbReference type="EC" id="4.1.1.61"/>
<dbReference type="EMBL" id="AE001363">
    <property type="protein sequence ID" value="AAD18477.1"/>
    <property type="molecule type" value="Genomic_DNA"/>
</dbReference>
<dbReference type="EMBL" id="AE002161">
    <property type="protein sequence ID" value="AAF38271.1"/>
    <property type="molecule type" value="Genomic_DNA"/>
</dbReference>
<dbReference type="EMBL" id="BA000008">
    <property type="protein sequence ID" value="BAA98538.1"/>
    <property type="molecule type" value="Genomic_DNA"/>
</dbReference>
<dbReference type="EMBL" id="AE009440">
    <property type="protein sequence ID" value="AAP98271.1"/>
    <property type="molecule type" value="Genomic_DNA"/>
</dbReference>
<dbReference type="PIR" id="A72092">
    <property type="entry name" value="A72092"/>
</dbReference>
<dbReference type="PIR" id="H86531">
    <property type="entry name" value="H86531"/>
</dbReference>
<dbReference type="RefSeq" id="NP_224533.1">
    <property type="nucleotide sequence ID" value="NC_000922.1"/>
</dbReference>
<dbReference type="RefSeq" id="WP_010882976.1">
    <property type="nucleotide sequence ID" value="NZ_LN847257.1"/>
</dbReference>
<dbReference type="SMR" id="Q9Z8L0"/>
<dbReference type="STRING" id="406984.CPK_ORF00838"/>
<dbReference type="GeneID" id="45050377"/>
<dbReference type="KEGG" id="cpa:CP_0429"/>
<dbReference type="KEGG" id="cpj:CPj0328"/>
<dbReference type="KEGG" id="cpn:CPn_0328"/>
<dbReference type="KEGG" id="cpt:CpB0338"/>
<dbReference type="PATRIC" id="fig|115713.3.peg.364"/>
<dbReference type="eggNOG" id="COG0043">
    <property type="taxonomic scope" value="Bacteria"/>
</dbReference>
<dbReference type="HOGENOM" id="CLU_023348_4_1_0"/>
<dbReference type="OrthoDB" id="9809841at2"/>
<dbReference type="SABIO-RK" id="Q9Z8L0"/>
<dbReference type="Proteomes" id="UP000000583">
    <property type="component" value="Chromosome"/>
</dbReference>
<dbReference type="Proteomes" id="UP000000801">
    <property type="component" value="Chromosome"/>
</dbReference>
<dbReference type="GO" id="GO:0005737">
    <property type="term" value="C:cytoplasm"/>
    <property type="evidence" value="ECO:0007669"/>
    <property type="project" value="TreeGrafter"/>
</dbReference>
<dbReference type="GO" id="GO:0018799">
    <property type="term" value="F:4-hydroxybenzoate decarboxylase activity"/>
    <property type="evidence" value="ECO:0007669"/>
    <property type="project" value="UniProtKB-EC"/>
</dbReference>
<dbReference type="Gene3D" id="3.40.1670.10">
    <property type="entry name" value="UbiD C-terminal domain-like"/>
    <property type="match status" value="1"/>
</dbReference>
<dbReference type="InterPro" id="IPR022390">
    <property type="entry name" value="HBDC"/>
</dbReference>
<dbReference type="InterPro" id="IPR002830">
    <property type="entry name" value="UbiD"/>
</dbReference>
<dbReference type="InterPro" id="IPR049381">
    <property type="entry name" value="UbiD-like_C"/>
</dbReference>
<dbReference type="InterPro" id="IPR049383">
    <property type="entry name" value="UbiD-like_N"/>
</dbReference>
<dbReference type="InterPro" id="IPR048304">
    <property type="entry name" value="UbiD_Rift_dom"/>
</dbReference>
<dbReference type="NCBIfam" id="TIGR03701">
    <property type="entry name" value="mena_SCO4490"/>
    <property type="match status" value="1"/>
</dbReference>
<dbReference type="NCBIfam" id="TIGR00148">
    <property type="entry name" value="UbiD family decarboxylase"/>
    <property type="match status" value="1"/>
</dbReference>
<dbReference type="PANTHER" id="PTHR30108">
    <property type="entry name" value="3-OCTAPRENYL-4-HYDROXYBENZOATE CARBOXY-LYASE-RELATED"/>
    <property type="match status" value="1"/>
</dbReference>
<dbReference type="PANTHER" id="PTHR30108:SF7">
    <property type="entry name" value="3-POLYPRENYL-4-HYDROXYBENZOATE DECARBOXYLASE"/>
    <property type="match status" value="1"/>
</dbReference>
<dbReference type="Pfam" id="PF01977">
    <property type="entry name" value="UbiD"/>
    <property type="match status" value="1"/>
</dbReference>
<dbReference type="Pfam" id="PF20696">
    <property type="entry name" value="UbiD_C"/>
    <property type="match status" value="1"/>
</dbReference>
<dbReference type="Pfam" id="PF20695">
    <property type="entry name" value="UbiD_N"/>
    <property type="match status" value="1"/>
</dbReference>
<dbReference type="SUPFAM" id="SSF50475">
    <property type="entry name" value="FMN-binding split barrel"/>
    <property type="match status" value="1"/>
</dbReference>
<dbReference type="SUPFAM" id="SSF143968">
    <property type="entry name" value="UbiD C-terminal domain-like"/>
    <property type="match status" value="2"/>
</dbReference>
<reference key="1">
    <citation type="journal article" date="1999" name="Nat. Genet.">
        <title>Comparative genomes of Chlamydia pneumoniae and C. trachomatis.</title>
        <authorList>
            <person name="Kalman S."/>
            <person name="Mitchell W.P."/>
            <person name="Marathe R."/>
            <person name="Lammel C.J."/>
            <person name="Fan J."/>
            <person name="Hyman R.W."/>
            <person name="Olinger L."/>
            <person name="Grimwood J."/>
            <person name="Davis R.W."/>
            <person name="Stephens R.S."/>
        </authorList>
    </citation>
    <scope>NUCLEOTIDE SEQUENCE [LARGE SCALE GENOMIC DNA]</scope>
    <source>
        <strain>CWL029</strain>
    </source>
</reference>
<reference key="2">
    <citation type="journal article" date="2000" name="Nucleic Acids Res.">
        <title>Genome sequences of Chlamydia trachomatis MoPn and Chlamydia pneumoniae AR39.</title>
        <authorList>
            <person name="Read T.D."/>
            <person name="Brunham R.C."/>
            <person name="Shen C."/>
            <person name="Gill S.R."/>
            <person name="Heidelberg J.F."/>
            <person name="White O."/>
            <person name="Hickey E.K."/>
            <person name="Peterson J.D."/>
            <person name="Utterback T.R."/>
            <person name="Berry K.J."/>
            <person name="Bass S."/>
            <person name="Linher K.D."/>
            <person name="Weidman J.F."/>
            <person name="Khouri H.M."/>
            <person name="Craven B."/>
            <person name="Bowman C."/>
            <person name="Dodson R.J."/>
            <person name="Gwinn M.L."/>
            <person name="Nelson W.C."/>
            <person name="DeBoy R.T."/>
            <person name="Kolonay J.F."/>
            <person name="McClarty G."/>
            <person name="Salzberg S.L."/>
            <person name="Eisen J.A."/>
            <person name="Fraser C.M."/>
        </authorList>
    </citation>
    <scope>NUCLEOTIDE SEQUENCE [LARGE SCALE GENOMIC DNA]</scope>
    <source>
        <strain>AR39</strain>
    </source>
</reference>
<reference key="3">
    <citation type="journal article" date="2000" name="Nucleic Acids Res.">
        <title>Comparison of whole genome sequences of Chlamydia pneumoniae J138 from Japan and CWL029 from USA.</title>
        <authorList>
            <person name="Shirai M."/>
            <person name="Hirakawa H."/>
            <person name="Kimoto M."/>
            <person name="Tabuchi M."/>
            <person name="Kishi F."/>
            <person name="Ouchi K."/>
            <person name="Shiba T."/>
            <person name="Ishii K."/>
            <person name="Hattori M."/>
            <person name="Kuhara S."/>
            <person name="Nakazawa T."/>
        </authorList>
    </citation>
    <scope>NUCLEOTIDE SEQUENCE [LARGE SCALE GENOMIC DNA]</scope>
    <source>
        <strain>J138</strain>
    </source>
</reference>
<reference key="4">
    <citation type="submission" date="2002-05" db="EMBL/GenBank/DDBJ databases">
        <title>The genome sequence of Chlamydia pneumoniae TW183 and comparison with other Chlamydia strains based on whole genome sequence analysis.</title>
        <authorList>
            <person name="Geng M.M."/>
            <person name="Schuhmacher A."/>
            <person name="Muehldorfer I."/>
            <person name="Bensch K.W."/>
            <person name="Schaefer K.P."/>
            <person name="Schneider S."/>
            <person name="Pohl T."/>
            <person name="Essig A."/>
            <person name="Marre R."/>
            <person name="Melchers K."/>
        </authorList>
    </citation>
    <scope>NUCLEOTIDE SEQUENCE [LARGE SCALE GENOMIC DNA]</scope>
    <source>
        <strain>TW-183</strain>
    </source>
</reference>
<reference key="5">
    <citation type="journal article" date="2007" name="Curr. Microbiol.">
        <title>Purification and characterization of a 4-hydroxybenzoate decarboxylase from Chlamydophila pneumoniae AR39.</title>
        <authorList>
            <person name="Liu J."/>
            <person name="Zhang X."/>
            <person name="Zhou S."/>
            <person name="Tao P."/>
            <person name="Liu J."/>
        </authorList>
    </citation>
    <scope>FUNCTION</scope>
    <scope>CATALYTIC ACTIVITY</scope>
    <scope>ACTIVITY REGULATION</scope>
    <scope>BIOPHYSICOCHEMICAL PROPERTIES</scope>
</reference>